<protein>
    <recommendedName>
        <fullName evidence="1">Small ribosomal subunit protein uS3</fullName>
    </recommendedName>
    <alternativeName>
        <fullName evidence="2">30S ribosomal protein S3</fullName>
    </alternativeName>
</protein>
<keyword id="KW-1185">Reference proteome</keyword>
<keyword id="KW-0687">Ribonucleoprotein</keyword>
<keyword id="KW-0689">Ribosomal protein</keyword>
<keyword id="KW-0694">RNA-binding</keyword>
<keyword id="KW-0699">rRNA-binding</keyword>
<name>RS3_SHISS</name>
<evidence type="ECO:0000255" key="1">
    <source>
        <dbReference type="HAMAP-Rule" id="MF_01309"/>
    </source>
</evidence>
<evidence type="ECO:0000305" key="2"/>
<proteinExistence type="inferred from homology"/>
<comment type="function">
    <text evidence="1">Binds the lower part of the 30S subunit head. Binds mRNA in the 70S ribosome, positioning it for translation.</text>
</comment>
<comment type="subunit">
    <text evidence="1">Part of the 30S ribosomal subunit. Forms a tight complex with proteins S10 and S14.</text>
</comment>
<comment type="similarity">
    <text evidence="1">Belongs to the universal ribosomal protein uS3 family.</text>
</comment>
<reference key="1">
    <citation type="journal article" date="2005" name="Nucleic Acids Res.">
        <title>Genome dynamics and diversity of Shigella species, the etiologic agents of bacillary dysentery.</title>
        <authorList>
            <person name="Yang F."/>
            <person name="Yang J."/>
            <person name="Zhang X."/>
            <person name="Chen L."/>
            <person name="Jiang Y."/>
            <person name="Yan Y."/>
            <person name="Tang X."/>
            <person name="Wang J."/>
            <person name="Xiong Z."/>
            <person name="Dong J."/>
            <person name="Xue Y."/>
            <person name="Zhu Y."/>
            <person name="Xu X."/>
            <person name="Sun L."/>
            <person name="Chen S."/>
            <person name="Nie H."/>
            <person name="Peng J."/>
            <person name="Xu J."/>
            <person name="Wang Y."/>
            <person name="Yuan Z."/>
            <person name="Wen Y."/>
            <person name="Yao Z."/>
            <person name="Shen Y."/>
            <person name="Qiang B."/>
            <person name="Hou Y."/>
            <person name="Yu J."/>
            <person name="Jin Q."/>
        </authorList>
    </citation>
    <scope>NUCLEOTIDE SEQUENCE [LARGE SCALE GENOMIC DNA]</scope>
    <source>
        <strain>Ss046</strain>
    </source>
</reference>
<dbReference type="EMBL" id="CP000038">
    <property type="protein sequence ID" value="AAZ90017.1"/>
    <property type="molecule type" value="Genomic_DNA"/>
</dbReference>
<dbReference type="RefSeq" id="WP_000529945.1">
    <property type="nucleotide sequence ID" value="NC_007384.1"/>
</dbReference>
<dbReference type="SMR" id="Q3YWU5"/>
<dbReference type="GeneID" id="97603663"/>
<dbReference type="KEGG" id="ssn:SSON_3455"/>
<dbReference type="HOGENOM" id="CLU_058591_0_2_6"/>
<dbReference type="Proteomes" id="UP000002529">
    <property type="component" value="Chromosome"/>
</dbReference>
<dbReference type="GO" id="GO:0022627">
    <property type="term" value="C:cytosolic small ribosomal subunit"/>
    <property type="evidence" value="ECO:0007669"/>
    <property type="project" value="TreeGrafter"/>
</dbReference>
<dbReference type="GO" id="GO:0003729">
    <property type="term" value="F:mRNA binding"/>
    <property type="evidence" value="ECO:0007669"/>
    <property type="project" value="UniProtKB-UniRule"/>
</dbReference>
<dbReference type="GO" id="GO:0019843">
    <property type="term" value="F:rRNA binding"/>
    <property type="evidence" value="ECO:0007669"/>
    <property type="project" value="UniProtKB-UniRule"/>
</dbReference>
<dbReference type="GO" id="GO:0003735">
    <property type="term" value="F:structural constituent of ribosome"/>
    <property type="evidence" value="ECO:0007669"/>
    <property type="project" value="InterPro"/>
</dbReference>
<dbReference type="GO" id="GO:0006412">
    <property type="term" value="P:translation"/>
    <property type="evidence" value="ECO:0007669"/>
    <property type="project" value="UniProtKB-UniRule"/>
</dbReference>
<dbReference type="CDD" id="cd02412">
    <property type="entry name" value="KH-II_30S_S3"/>
    <property type="match status" value="1"/>
</dbReference>
<dbReference type="FunFam" id="3.30.1140.32:FF:000001">
    <property type="entry name" value="30S ribosomal protein S3"/>
    <property type="match status" value="1"/>
</dbReference>
<dbReference type="FunFam" id="3.30.300.20:FF:000001">
    <property type="entry name" value="30S ribosomal protein S3"/>
    <property type="match status" value="1"/>
</dbReference>
<dbReference type="Gene3D" id="3.30.300.20">
    <property type="match status" value="1"/>
</dbReference>
<dbReference type="Gene3D" id="3.30.1140.32">
    <property type="entry name" value="Ribosomal protein S3, C-terminal domain"/>
    <property type="match status" value="1"/>
</dbReference>
<dbReference type="HAMAP" id="MF_01309_B">
    <property type="entry name" value="Ribosomal_uS3_B"/>
    <property type="match status" value="1"/>
</dbReference>
<dbReference type="InterPro" id="IPR004087">
    <property type="entry name" value="KH_dom"/>
</dbReference>
<dbReference type="InterPro" id="IPR015946">
    <property type="entry name" value="KH_dom-like_a/b"/>
</dbReference>
<dbReference type="InterPro" id="IPR004044">
    <property type="entry name" value="KH_dom_type_2"/>
</dbReference>
<dbReference type="InterPro" id="IPR009019">
    <property type="entry name" value="KH_sf_prok-type"/>
</dbReference>
<dbReference type="InterPro" id="IPR036419">
    <property type="entry name" value="Ribosomal_S3_C_sf"/>
</dbReference>
<dbReference type="InterPro" id="IPR005704">
    <property type="entry name" value="Ribosomal_uS3_bac-typ"/>
</dbReference>
<dbReference type="InterPro" id="IPR001351">
    <property type="entry name" value="Ribosomal_uS3_C"/>
</dbReference>
<dbReference type="InterPro" id="IPR018280">
    <property type="entry name" value="Ribosomal_uS3_CS"/>
</dbReference>
<dbReference type="NCBIfam" id="TIGR01009">
    <property type="entry name" value="rpsC_bact"/>
    <property type="match status" value="1"/>
</dbReference>
<dbReference type="PANTHER" id="PTHR11760">
    <property type="entry name" value="30S/40S RIBOSOMAL PROTEIN S3"/>
    <property type="match status" value="1"/>
</dbReference>
<dbReference type="PANTHER" id="PTHR11760:SF19">
    <property type="entry name" value="SMALL RIBOSOMAL SUBUNIT PROTEIN US3C"/>
    <property type="match status" value="1"/>
</dbReference>
<dbReference type="Pfam" id="PF07650">
    <property type="entry name" value="KH_2"/>
    <property type="match status" value="1"/>
</dbReference>
<dbReference type="Pfam" id="PF00189">
    <property type="entry name" value="Ribosomal_S3_C"/>
    <property type="match status" value="1"/>
</dbReference>
<dbReference type="SMART" id="SM00322">
    <property type="entry name" value="KH"/>
    <property type="match status" value="1"/>
</dbReference>
<dbReference type="SUPFAM" id="SSF54814">
    <property type="entry name" value="Prokaryotic type KH domain (KH-domain type II)"/>
    <property type="match status" value="1"/>
</dbReference>
<dbReference type="SUPFAM" id="SSF54821">
    <property type="entry name" value="Ribosomal protein S3 C-terminal domain"/>
    <property type="match status" value="1"/>
</dbReference>
<dbReference type="PROSITE" id="PS50823">
    <property type="entry name" value="KH_TYPE_2"/>
    <property type="match status" value="1"/>
</dbReference>
<dbReference type="PROSITE" id="PS00548">
    <property type="entry name" value="RIBOSOMAL_S3"/>
    <property type="match status" value="1"/>
</dbReference>
<sequence length="233" mass="25983">MGQKVHPNGIRLGIVKPWNSTWFANTKEFADNLDSDFKVRQYLTKELAKASVSRIVIERPAKSIRVTIHTARPGIVIGKKGEDVEKLRKVVADIAGVPAQINIAEVRKPELDAKLVADSITSQLERRVMFRRAMKRAVQNAMRLGAKGIKVEVSGRLGGAEIARTEWYREGRVPLHTLRADIDYNTSEAHTTYGVIGVKVWIFKGEILGGMAAVEQPEKPAAQPKKQQRKGRK</sequence>
<gene>
    <name evidence="1" type="primary">rpsC</name>
    <name type="ordered locus">SSON_3455</name>
</gene>
<organism>
    <name type="scientific">Shigella sonnei (strain Ss046)</name>
    <dbReference type="NCBI Taxonomy" id="300269"/>
    <lineage>
        <taxon>Bacteria</taxon>
        <taxon>Pseudomonadati</taxon>
        <taxon>Pseudomonadota</taxon>
        <taxon>Gammaproteobacteria</taxon>
        <taxon>Enterobacterales</taxon>
        <taxon>Enterobacteriaceae</taxon>
        <taxon>Shigella</taxon>
    </lineage>
</organism>
<feature type="chain" id="PRO_0000230728" description="Small ribosomal subunit protein uS3">
    <location>
        <begin position="1"/>
        <end position="233"/>
    </location>
</feature>
<feature type="domain" description="KH type-2" evidence="1">
    <location>
        <begin position="39"/>
        <end position="107"/>
    </location>
</feature>
<accession>Q3YWU5</accession>